<accession>C3L769</accession>
<comment type="similarity">
    <text evidence="1">Belongs to the bacterial ribosomal protein bL28 family.</text>
</comment>
<gene>
    <name evidence="1" type="primary">rpmB</name>
    <name type="ordered locus">BAMEG_0635</name>
</gene>
<proteinExistence type="inferred from homology"/>
<protein>
    <recommendedName>
        <fullName evidence="1">Large ribosomal subunit protein bL28</fullName>
    </recommendedName>
    <alternativeName>
        <fullName evidence="3">50S ribosomal protein L28</fullName>
    </alternativeName>
</protein>
<reference key="1">
    <citation type="submission" date="2008-10" db="EMBL/GenBank/DDBJ databases">
        <title>Genome sequence of Bacillus anthracis str. CDC 684.</title>
        <authorList>
            <person name="Dodson R.J."/>
            <person name="Munk A.C."/>
            <person name="Brettin T."/>
            <person name="Bruce D."/>
            <person name="Detter C."/>
            <person name="Tapia R."/>
            <person name="Han C."/>
            <person name="Sutton G."/>
            <person name="Sims D."/>
        </authorList>
    </citation>
    <scope>NUCLEOTIDE SEQUENCE [LARGE SCALE GENOMIC DNA]</scope>
    <source>
        <strain>CDC 684 / NRRL 3495</strain>
    </source>
</reference>
<keyword id="KW-0687">Ribonucleoprotein</keyword>
<keyword id="KW-0689">Ribosomal protein</keyword>
<sequence>MARVCTITGRKARSGNSRSHAMNATKRKWGANLQKVRVRIDGKVQRVYVSARALKSGKIERV</sequence>
<feature type="chain" id="PRO_1000195901" description="Large ribosomal subunit protein bL28">
    <location>
        <begin position="1"/>
        <end position="62"/>
    </location>
</feature>
<feature type="region of interest" description="Disordered" evidence="2">
    <location>
        <begin position="1"/>
        <end position="28"/>
    </location>
</feature>
<evidence type="ECO:0000255" key="1">
    <source>
        <dbReference type="HAMAP-Rule" id="MF_00373"/>
    </source>
</evidence>
<evidence type="ECO:0000256" key="2">
    <source>
        <dbReference type="SAM" id="MobiDB-lite"/>
    </source>
</evidence>
<evidence type="ECO:0000305" key="3"/>
<organism>
    <name type="scientific">Bacillus anthracis (strain CDC 684 / NRRL 3495)</name>
    <dbReference type="NCBI Taxonomy" id="568206"/>
    <lineage>
        <taxon>Bacteria</taxon>
        <taxon>Bacillati</taxon>
        <taxon>Bacillota</taxon>
        <taxon>Bacilli</taxon>
        <taxon>Bacillales</taxon>
        <taxon>Bacillaceae</taxon>
        <taxon>Bacillus</taxon>
        <taxon>Bacillus cereus group</taxon>
    </lineage>
</organism>
<name>RL28_BACAC</name>
<dbReference type="EMBL" id="CP001215">
    <property type="protein sequence ID" value="ACP12245.1"/>
    <property type="molecule type" value="Genomic_DNA"/>
</dbReference>
<dbReference type="RefSeq" id="WP_000124778.1">
    <property type="nucleotide sequence ID" value="NC_012581.1"/>
</dbReference>
<dbReference type="SMR" id="C3L769"/>
<dbReference type="GeneID" id="45023686"/>
<dbReference type="KEGG" id="bah:BAMEG_0635"/>
<dbReference type="HOGENOM" id="CLU_064548_7_1_9"/>
<dbReference type="GO" id="GO:1990904">
    <property type="term" value="C:ribonucleoprotein complex"/>
    <property type="evidence" value="ECO:0007669"/>
    <property type="project" value="UniProtKB-KW"/>
</dbReference>
<dbReference type="GO" id="GO:0005840">
    <property type="term" value="C:ribosome"/>
    <property type="evidence" value="ECO:0007669"/>
    <property type="project" value="UniProtKB-KW"/>
</dbReference>
<dbReference type="GO" id="GO:0003735">
    <property type="term" value="F:structural constituent of ribosome"/>
    <property type="evidence" value="ECO:0007669"/>
    <property type="project" value="InterPro"/>
</dbReference>
<dbReference type="GO" id="GO:0006412">
    <property type="term" value="P:translation"/>
    <property type="evidence" value="ECO:0007669"/>
    <property type="project" value="UniProtKB-UniRule"/>
</dbReference>
<dbReference type="Gene3D" id="2.30.170.40">
    <property type="entry name" value="Ribosomal protein L28/L24"/>
    <property type="match status" value="1"/>
</dbReference>
<dbReference type="HAMAP" id="MF_00373">
    <property type="entry name" value="Ribosomal_bL28"/>
    <property type="match status" value="1"/>
</dbReference>
<dbReference type="InterPro" id="IPR050096">
    <property type="entry name" value="Bacterial_rp_bL28"/>
</dbReference>
<dbReference type="InterPro" id="IPR026569">
    <property type="entry name" value="Ribosomal_bL28"/>
</dbReference>
<dbReference type="InterPro" id="IPR034704">
    <property type="entry name" value="Ribosomal_bL28/bL31-like_sf"/>
</dbReference>
<dbReference type="InterPro" id="IPR001383">
    <property type="entry name" value="Ribosomal_bL28_bact-type"/>
</dbReference>
<dbReference type="InterPro" id="IPR037147">
    <property type="entry name" value="Ribosomal_bL28_sf"/>
</dbReference>
<dbReference type="NCBIfam" id="TIGR00009">
    <property type="entry name" value="L28"/>
    <property type="match status" value="1"/>
</dbReference>
<dbReference type="PANTHER" id="PTHR39080">
    <property type="entry name" value="50S RIBOSOMAL PROTEIN L28"/>
    <property type="match status" value="1"/>
</dbReference>
<dbReference type="PANTHER" id="PTHR39080:SF1">
    <property type="entry name" value="LARGE RIBOSOMAL SUBUNIT PROTEIN BL28A"/>
    <property type="match status" value="1"/>
</dbReference>
<dbReference type="Pfam" id="PF00830">
    <property type="entry name" value="Ribosomal_L28"/>
    <property type="match status" value="1"/>
</dbReference>
<dbReference type="SUPFAM" id="SSF143800">
    <property type="entry name" value="L28p-like"/>
    <property type="match status" value="1"/>
</dbReference>